<reference key="1">
    <citation type="submission" date="2007-03" db="EMBL/GenBank/DDBJ databases">
        <title>Complete sequence of chromosome 1 of Burkholderia vietnamiensis G4.</title>
        <authorList>
            <consortium name="US DOE Joint Genome Institute"/>
            <person name="Copeland A."/>
            <person name="Lucas S."/>
            <person name="Lapidus A."/>
            <person name="Barry K."/>
            <person name="Detter J.C."/>
            <person name="Glavina del Rio T."/>
            <person name="Hammon N."/>
            <person name="Israni S."/>
            <person name="Dalin E."/>
            <person name="Tice H."/>
            <person name="Pitluck S."/>
            <person name="Chain P."/>
            <person name="Malfatti S."/>
            <person name="Shin M."/>
            <person name="Vergez L."/>
            <person name="Schmutz J."/>
            <person name="Larimer F."/>
            <person name="Land M."/>
            <person name="Hauser L."/>
            <person name="Kyrpides N."/>
            <person name="Tiedje J."/>
            <person name="Richardson P."/>
        </authorList>
    </citation>
    <scope>NUCLEOTIDE SEQUENCE [LARGE SCALE GENOMIC DNA]</scope>
    <source>
        <strain>G4 / LMG 22486</strain>
    </source>
</reference>
<sequence length="181" mass="19314">MENTQENPATQSAEDIGSAKQAAQGAAPAAEAADAALAEAQAKVAELQESYLRAKAETENVRRRAQDDVSKAHKFAIESFAEHLLPVLDSLEAAAVDTSGDIAKVREGVELTLRQLTSALEKGRVVAINPVGEKFDPHQHQAISMVPAEQEPNTVVAVLQKGYMIADRVLRPALVTVAQPK</sequence>
<keyword id="KW-0143">Chaperone</keyword>
<keyword id="KW-0963">Cytoplasm</keyword>
<keyword id="KW-0346">Stress response</keyword>
<gene>
    <name evidence="1" type="primary">grpE</name>
    <name type="ordered locus">Bcep1808_0710</name>
</gene>
<protein>
    <recommendedName>
        <fullName evidence="1">Protein GrpE</fullName>
    </recommendedName>
    <alternativeName>
        <fullName evidence="1">HSP-70 cofactor</fullName>
    </alternativeName>
</protein>
<accession>A4JBR9</accession>
<evidence type="ECO:0000255" key="1">
    <source>
        <dbReference type="HAMAP-Rule" id="MF_01151"/>
    </source>
</evidence>
<evidence type="ECO:0000256" key="2">
    <source>
        <dbReference type="SAM" id="MobiDB-lite"/>
    </source>
</evidence>
<proteinExistence type="inferred from homology"/>
<name>GRPE_BURVG</name>
<comment type="function">
    <text evidence="1">Participates actively in the response to hyperosmotic and heat shock by preventing the aggregation of stress-denatured proteins, in association with DnaK and GrpE. It is the nucleotide exchange factor for DnaK and may function as a thermosensor. Unfolded proteins bind initially to DnaJ; upon interaction with the DnaJ-bound protein, DnaK hydrolyzes its bound ATP, resulting in the formation of a stable complex. GrpE releases ADP from DnaK; ATP binding to DnaK triggers the release of the substrate protein, thus completing the reaction cycle. Several rounds of ATP-dependent interactions between DnaJ, DnaK and GrpE are required for fully efficient folding.</text>
</comment>
<comment type="subunit">
    <text evidence="1">Homodimer.</text>
</comment>
<comment type="subcellular location">
    <subcellularLocation>
        <location evidence="1">Cytoplasm</location>
    </subcellularLocation>
</comment>
<comment type="similarity">
    <text evidence="1">Belongs to the GrpE family.</text>
</comment>
<feature type="chain" id="PRO_1000137552" description="Protein GrpE">
    <location>
        <begin position="1"/>
        <end position="181"/>
    </location>
</feature>
<feature type="region of interest" description="Disordered" evidence="2">
    <location>
        <begin position="1"/>
        <end position="34"/>
    </location>
</feature>
<feature type="compositionally biased region" description="Polar residues" evidence="2">
    <location>
        <begin position="1"/>
        <end position="13"/>
    </location>
</feature>
<feature type="compositionally biased region" description="Low complexity" evidence="2">
    <location>
        <begin position="19"/>
        <end position="34"/>
    </location>
</feature>
<organism>
    <name type="scientific">Burkholderia vietnamiensis (strain G4 / LMG 22486)</name>
    <name type="common">Burkholderia cepacia (strain R1808)</name>
    <dbReference type="NCBI Taxonomy" id="269482"/>
    <lineage>
        <taxon>Bacteria</taxon>
        <taxon>Pseudomonadati</taxon>
        <taxon>Pseudomonadota</taxon>
        <taxon>Betaproteobacteria</taxon>
        <taxon>Burkholderiales</taxon>
        <taxon>Burkholderiaceae</taxon>
        <taxon>Burkholderia</taxon>
        <taxon>Burkholderia cepacia complex</taxon>
    </lineage>
</organism>
<dbReference type="EMBL" id="CP000614">
    <property type="protein sequence ID" value="ABO53722.1"/>
    <property type="molecule type" value="Genomic_DNA"/>
</dbReference>
<dbReference type="SMR" id="A4JBR9"/>
<dbReference type="KEGG" id="bvi:Bcep1808_0710"/>
<dbReference type="eggNOG" id="COG0576">
    <property type="taxonomic scope" value="Bacteria"/>
</dbReference>
<dbReference type="HOGENOM" id="CLU_057217_6_1_4"/>
<dbReference type="Proteomes" id="UP000002287">
    <property type="component" value="Chromosome 1"/>
</dbReference>
<dbReference type="GO" id="GO:0005829">
    <property type="term" value="C:cytosol"/>
    <property type="evidence" value="ECO:0007669"/>
    <property type="project" value="TreeGrafter"/>
</dbReference>
<dbReference type="GO" id="GO:0000774">
    <property type="term" value="F:adenyl-nucleotide exchange factor activity"/>
    <property type="evidence" value="ECO:0007669"/>
    <property type="project" value="InterPro"/>
</dbReference>
<dbReference type="GO" id="GO:0042803">
    <property type="term" value="F:protein homodimerization activity"/>
    <property type="evidence" value="ECO:0007669"/>
    <property type="project" value="InterPro"/>
</dbReference>
<dbReference type="GO" id="GO:0051087">
    <property type="term" value="F:protein-folding chaperone binding"/>
    <property type="evidence" value="ECO:0007669"/>
    <property type="project" value="InterPro"/>
</dbReference>
<dbReference type="GO" id="GO:0051082">
    <property type="term" value="F:unfolded protein binding"/>
    <property type="evidence" value="ECO:0007669"/>
    <property type="project" value="TreeGrafter"/>
</dbReference>
<dbReference type="GO" id="GO:0006457">
    <property type="term" value="P:protein folding"/>
    <property type="evidence" value="ECO:0007669"/>
    <property type="project" value="InterPro"/>
</dbReference>
<dbReference type="CDD" id="cd00446">
    <property type="entry name" value="GrpE"/>
    <property type="match status" value="1"/>
</dbReference>
<dbReference type="FunFam" id="2.30.22.10:FF:000001">
    <property type="entry name" value="Protein GrpE"/>
    <property type="match status" value="1"/>
</dbReference>
<dbReference type="Gene3D" id="3.90.20.20">
    <property type="match status" value="1"/>
</dbReference>
<dbReference type="Gene3D" id="2.30.22.10">
    <property type="entry name" value="Head domain of nucleotide exchange factor GrpE"/>
    <property type="match status" value="1"/>
</dbReference>
<dbReference type="HAMAP" id="MF_01151">
    <property type="entry name" value="GrpE"/>
    <property type="match status" value="1"/>
</dbReference>
<dbReference type="InterPro" id="IPR000740">
    <property type="entry name" value="GrpE"/>
</dbReference>
<dbReference type="InterPro" id="IPR013805">
    <property type="entry name" value="GrpE_coiled_coil"/>
</dbReference>
<dbReference type="InterPro" id="IPR009012">
    <property type="entry name" value="GrpE_head"/>
</dbReference>
<dbReference type="NCBIfam" id="NF010737">
    <property type="entry name" value="PRK14139.1"/>
    <property type="match status" value="1"/>
</dbReference>
<dbReference type="NCBIfam" id="NF010738">
    <property type="entry name" value="PRK14140.1"/>
    <property type="match status" value="1"/>
</dbReference>
<dbReference type="NCBIfam" id="NF010748">
    <property type="entry name" value="PRK14150.1"/>
    <property type="match status" value="1"/>
</dbReference>
<dbReference type="PANTHER" id="PTHR21237">
    <property type="entry name" value="GRPE PROTEIN"/>
    <property type="match status" value="1"/>
</dbReference>
<dbReference type="PANTHER" id="PTHR21237:SF23">
    <property type="entry name" value="GRPE PROTEIN HOMOLOG, MITOCHONDRIAL"/>
    <property type="match status" value="1"/>
</dbReference>
<dbReference type="Pfam" id="PF01025">
    <property type="entry name" value="GrpE"/>
    <property type="match status" value="1"/>
</dbReference>
<dbReference type="PRINTS" id="PR00773">
    <property type="entry name" value="GRPEPROTEIN"/>
</dbReference>
<dbReference type="SUPFAM" id="SSF58014">
    <property type="entry name" value="Coiled-coil domain of nucleotide exchange factor GrpE"/>
    <property type="match status" value="1"/>
</dbReference>
<dbReference type="SUPFAM" id="SSF51064">
    <property type="entry name" value="Head domain of nucleotide exchange factor GrpE"/>
    <property type="match status" value="1"/>
</dbReference>
<dbReference type="PROSITE" id="PS01071">
    <property type="entry name" value="GRPE"/>
    <property type="match status" value="1"/>
</dbReference>